<keyword id="KW-1185">Reference proteome</keyword>
<keyword id="KW-0687">Ribonucleoprotein</keyword>
<keyword id="KW-0689">Ribosomal protein</keyword>
<proteinExistence type="inferred from homology"/>
<accession>Q2K9Q3</accession>
<protein>
    <recommendedName>
        <fullName evidence="1">Large ribosomal subunit protein bL33</fullName>
    </recommendedName>
    <alternativeName>
        <fullName evidence="2">50S ribosomal protein L33</fullName>
    </alternativeName>
</protein>
<gene>
    <name evidence="1" type="primary">rpmG</name>
    <name type="ordered locus">RHE_CH01634</name>
</gene>
<name>RL33_RHIEC</name>
<evidence type="ECO:0000255" key="1">
    <source>
        <dbReference type="HAMAP-Rule" id="MF_00294"/>
    </source>
</evidence>
<evidence type="ECO:0000305" key="2"/>
<sequence length="55" mass="6331">MAKATTIKIKLLSTADTGFFYVTTKNSRTMTDKMTKTKYDPIAKKHVEFKETKIK</sequence>
<comment type="similarity">
    <text evidence="1">Belongs to the bacterial ribosomal protein bL33 family.</text>
</comment>
<feature type="chain" id="PRO_0000356623" description="Large ribosomal subunit protein bL33">
    <location>
        <begin position="1"/>
        <end position="55"/>
    </location>
</feature>
<reference key="1">
    <citation type="journal article" date="2006" name="Proc. Natl. Acad. Sci. U.S.A.">
        <title>The partitioned Rhizobium etli genome: genetic and metabolic redundancy in seven interacting replicons.</title>
        <authorList>
            <person name="Gonzalez V."/>
            <person name="Santamaria R.I."/>
            <person name="Bustos P."/>
            <person name="Hernandez-Gonzalez I."/>
            <person name="Medrano-Soto A."/>
            <person name="Moreno-Hagelsieb G."/>
            <person name="Janga S.C."/>
            <person name="Ramirez M.A."/>
            <person name="Jimenez-Jacinto V."/>
            <person name="Collado-Vides J."/>
            <person name="Davila G."/>
        </authorList>
    </citation>
    <scope>NUCLEOTIDE SEQUENCE [LARGE SCALE GENOMIC DNA]</scope>
    <source>
        <strain>ATCC 51251 / DSM 11541 / JCM 21823 / NBRC 15573 / CFN 42</strain>
    </source>
</reference>
<organism>
    <name type="scientific">Rhizobium etli (strain ATCC 51251 / DSM 11541 / JCM 21823 / NBRC 15573 / CFN 42)</name>
    <dbReference type="NCBI Taxonomy" id="347834"/>
    <lineage>
        <taxon>Bacteria</taxon>
        <taxon>Pseudomonadati</taxon>
        <taxon>Pseudomonadota</taxon>
        <taxon>Alphaproteobacteria</taxon>
        <taxon>Hyphomicrobiales</taxon>
        <taxon>Rhizobiaceae</taxon>
        <taxon>Rhizobium/Agrobacterium group</taxon>
        <taxon>Rhizobium</taxon>
    </lineage>
</organism>
<dbReference type="EMBL" id="CP000133">
    <property type="protein sequence ID" value="ABC90433.1"/>
    <property type="molecule type" value="Genomic_DNA"/>
</dbReference>
<dbReference type="RefSeq" id="WP_003587245.1">
    <property type="nucleotide sequence ID" value="NC_007761.1"/>
</dbReference>
<dbReference type="SMR" id="Q2K9Q3"/>
<dbReference type="GeneID" id="91148086"/>
<dbReference type="KEGG" id="ret:RHE_CH01634"/>
<dbReference type="eggNOG" id="COG0267">
    <property type="taxonomic scope" value="Bacteria"/>
</dbReference>
<dbReference type="HOGENOM" id="CLU_190949_1_1_5"/>
<dbReference type="Proteomes" id="UP000001936">
    <property type="component" value="Chromosome"/>
</dbReference>
<dbReference type="GO" id="GO:0022625">
    <property type="term" value="C:cytosolic large ribosomal subunit"/>
    <property type="evidence" value="ECO:0007669"/>
    <property type="project" value="TreeGrafter"/>
</dbReference>
<dbReference type="GO" id="GO:0003735">
    <property type="term" value="F:structural constituent of ribosome"/>
    <property type="evidence" value="ECO:0007669"/>
    <property type="project" value="InterPro"/>
</dbReference>
<dbReference type="GO" id="GO:0006412">
    <property type="term" value="P:translation"/>
    <property type="evidence" value="ECO:0007669"/>
    <property type="project" value="UniProtKB-UniRule"/>
</dbReference>
<dbReference type="Gene3D" id="2.20.28.120">
    <property type="entry name" value="Ribosomal protein L33"/>
    <property type="match status" value="1"/>
</dbReference>
<dbReference type="HAMAP" id="MF_00294">
    <property type="entry name" value="Ribosomal_bL33"/>
    <property type="match status" value="1"/>
</dbReference>
<dbReference type="InterPro" id="IPR001705">
    <property type="entry name" value="Ribosomal_bL33"/>
</dbReference>
<dbReference type="InterPro" id="IPR018264">
    <property type="entry name" value="Ribosomal_bL33_CS"/>
</dbReference>
<dbReference type="InterPro" id="IPR038584">
    <property type="entry name" value="Ribosomal_bL33_sf"/>
</dbReference>
<dbReference type="InterPro" id="IPR011332">
    <property type="entry name" value="Ribosomal_zn-bd"/>
</dbReference>
<dbReference type="NCBIfam" id="NF001860">
    <property type="entry name" value="PRK00595.1"/>
    <property type="match status" value="1"/>
</dbReference>
<dbReference type="NCBIfam" id="TIGR01023">
    <property type="entry name" value="rpmG_bact"/>
    <property type="match status" value="1"/>
</dbReference>
<dbReference type="PANTHER" id="PTHR15238">
    <property type="entry name" value="54S RIBOSOMAL PROTEIN L39, MITOCHONDRIAL"/>
    <property type="match status" value="1"/>
</dbReference>
<dbReference type="PANTHER" id="PTHR15238:SF1">
    <property type="entry name" value="LARGE RIBOSOMAL SUBUNIT PROTEIN BL33M"/>
    <property type="match status" value="1"/>
</dbReference>
<dbReference type="Pfam" id="PF00471">
    <property type="entry name" value="Ribosomal_L33"/>
    <property type="match status" value="1"/>
</dbReference>
<dbReference type="SUPFAM" id="SSF57829">
    <property type="entry name" value="Zn-binding ribosomal proteins"/>
    <property type="match status" value="1"/>
</dbReference>
<dbReference type="PROSITE" id="PS00582">
    <property type="entry name" value="RIBOSOMAL_L33"/>
    <property type="match status" value="1"/>
</dbReference>